<accession>Q12XS2</accession>
<reference key="1">
    <citation type="journal article" date="2009" name="ISME J.">
        <title>The genome sequence of the psychrophilic archaeon, Methanococcoides burtonii: the role of genome evolution in cold adaptation.</title>
        <authorList>
            <person name="Allen M.A."/>
            <person name="Lauro F.M."/>
            <person name="Williams T.J."/>
            <person name="Burg D."/>
            <person name="Siddiqui K.S."/>
            <person name="De Francisci D."/>
            <person name="Chong K.W."/>
            <person name="Pilak O."/>
            <person name="Chew H.H."/>
            <person name="De Maere M.Z."/>
            <person name="Ting L."/>
            <person name="Katrib M."/>
            <person name="Ng C."/>
            <person name="Sowers K.R."/>
            <person name="Galperin M.Y."/>
            <person name="Anderson I.J."/>
            <person name="Ivanova N."/>
            <person name="Dalin E."/>
            <person name="Martinez M."/>
            <person name="Lapidus A."/>
            <person name="Hauser L."/>
            <person name="Land M."/>
            <person name="Thomas T."/>
            <person name="Cavicchioli R."/>
        </authorList>
    </citation>
    <scope>NUCLEOTIDE SEQUENCE [LARGE SCALE GENOMIC DNA]</scope>
    <source>
        <strain>DSM 6242 / NBRC 107633 / OCM 468 / ACE-M</strain>
    </source>
</reference>
<reference key="2">
    <citation type="journal article" date="2017" name="Nat. Chem. Biol.">
        <title>Parallel evolution of non-homologous isofunctional enzymes in methionine biosynthesis.</title>
        <authorList>
            <person name="Bastard K."/>
            <person name="Perret A."/>
            <person name="Mariage A."/>
            <person name="Bessonnet T."/>
            <person name="Pinet-Turpault A."/>
            <person name="Petit J.L."/>
            <person name="Darii E."/>
            <person name="Bazire P."/>
            <person name="Vergne-Vaxelaire C."/>
            <person name="Brewee C."/>
            <person name="Debard A."/>
            <person name="Pellouin V."/>
            <person name="Besnard-Gonnet M."/>
            <person name="Artiguenave F."/>
            <person name="Medigue C."/>
            <person name="Vallenet D."/>
            <person name="Danchin A."/>
            <person name="Zaparucha A."/>
            <person name="Weissenbach J."/>
            <person name="Salanoubat M."/>
            <person name="de Berardinis V."/>
        </authorList>
    </citation>
    <scope>FUNCTION</scope>
    <scope>CATALYTIC ACTIVITY</scope>
</reference>
<evidence type="ECO:0000255" key="1">
    <source>
        <dbReference type="HAMAP-Rule" id="MF_00296"/>
    </source>
</evidence>
<evidence type="ECO:0000269" key="2">
    <source>
    </source>
</evidence>
<evidence type="ECO:0000303" key="3">
    <source>
    </source>
</evidence>
<evidence type="ECO:0000312" key="4">
    <source>
        <dbReference type="EMBL" id="ABE51754.1"/>
    </source>
</evidence>
<name>METXA_METBU</name>
<protein>
    <recommendedName>
        <fullName evidence="1">Homoserine O-acetyltransferase</fullName>
        <shortName evidence="1 3">HAT</shortName>
        <ecNumber evidence="1 2">2.3.1.31</ecNumber>
    </recommendedName>
    <alternativeName>
        <fullName evidence="1">Homoserine transacetylase</fullName>
        <shortName evidence="1">HTA</shortName>
    </alternativeName>
</protein>
<proteinExistence type="evidence at protein level"/>
<dbReference type="EC" id="2.3.1.31" evidence="1 2"/>
<dbReference type="EMBL" id="CP000300">
    <property type="protein sequence ID" value="ABE51754.1"/>
    <property type="molecule type" value="Genomic_DNA"/>
</dbReference>
<dbReference type="RefSeq" id="WP_011498907.1">
    <property type="nucleotide sequence ID" value="NC_007955.1"/>
</dbReference>
<dbReference type="SMR" id="Q12XS2"/>
<dbReference type="STRING" id="259564.Mbur_0798"/>
<dbReference type="ESTHER" id="metbu-q12xs2">
    <property type="family name" value="Homoserine_transacetylase"/>
</dbReference>
<dbReference type="GeneID" id="3996703"/>
<dbReference type="KEGG" id="mbu:Mbur_0798"/>
<dbReference type="HOGENOM" id="CLU_028760_1_1_2"/>
<dbReference type="OrthoDB" id="295172at2157"/>
<dbReference type="UniPathway" id="UPA00051">
    <property type="reaction ID" value="UER00074"/>
</dbReference>
<dbReference type="Proteomes" id="UP000001979">
    <property type="component" value="Chromosome"/>
</dbReference>
<dbReference type="GO" id="GO:0005737">
    <property type="term" value="C:cytoplasm"/>
    <property type="evidence" value="ECO:0007669"/>
    <property type="project" value="UniProtKB-SubCell"/>
</dbReference>
<dbReference type="GO" id="GO:0004414">
    <property type="term" value="F:homoserine O-acetyltransferase activity"/>
    <property type="evidence" value="ECO:0007669"/>
    <property type="project" value="UniProtKB-UniRule"/>
</dbReference>
<dbReference type="GO" id="GO:0009092">
    <property type="term" value="P:homoserine metabolic process"/>
    <property type="evidence" value="ECO:0007669"/>
    <property type="project" value="TreeGrafter"/>
</dbReference>
<dbReference type="GO" id="GO:0009086">
    <property type="term" value="P:methionine biosynthetic process"/>
    <property type="evidence" value="ECO:0007669"/>
    <property type="project" value="UniProtKB-UniRule"/>
</dbReference>
<dbReference type="CDD" id="cd04605">
    <property type="entry name" value="CBS_pair_arch_MET2_assoc"/>
    <property type="match status" value="1"/>
</dbReference>
<dbReference type="FunFam" id="1.10.1740.110:FF:000001">
    <property type="entry name" value="Homoserine O-acetyltransferase"/>
    <property type="match status" value="1"/>
</dbReference>
<dbReference type="Gene3D" id="1.10.1740.110">
    <property type="match status" value="1"/>
</dbReference>
<dbReference type="Gene3D" id="3.40.50.1820">
    <property type="entry name" value="alpha/beta hydrolase"/>
    <property type="match status" value="1"/>
</dbReference>
<dbReference type="Gene3D" id="3.10.580.10">
    <property type="entry name" value="CBS-domain"/>
    <property type="match status" value="1"/>
</dbReference>
<dbReference type="HAMAP" id="MF_00296">
    <property type="entry name" value="MetX_acyltransf"/>
    <property type="match status" value="1"/>
</dbReference>
<dbReference type="InterPro" id="IPR000073">
    <property type="entry name" value="AB_hydrolase_1"/>
</dbReference>
<dbReference type="InterPro" id="IPR029058">
    <property type="entry name" value="AB_hydrolase_fold"/>
</dbReference>
<dbReference type="InterPro" id="IPR000644">
    <property type="entry name" value="CBS_dom"/>
</dbReference>
<dbReference type="InterPro" id="IPR046342">
    <property type="entry name" value="CBS_dom_sf"/>
</dbReference>
<dbReference type="InterPro" id="IPR008220">
    <property type="entry name" value="HAT_MetX-like"/>
</dbReference>
<dbReference type="NCBIfam" id="TIGR01392">
    <property type="entry name" value="homoserO_Ac_trn"/>
    <property type="match status" value="1"/>
</dbReference>
<dbReference type="NCBIfam" id="NF001209">
    <property type="entry name" value="PRK00175.1"/>
    <property type="match status" value="1"/>
</dbReference>
<dbReference type="PANTHER" id="PTHR32268">
    <property type="entry name" value="HOMOSERINE O-ACETYLTRANSFERASE"/>
    <property type="match status" value="1"/>
</dbReference>
<dbReference type="PANTHER" id="PTHR32268:SF11">
    <property type="entry name" value="HOMOSERINE O-ACETYLTRANSFERASE"/>
    <property type="match status" value="1"/>
</dbReference>
<dbReference type="Pfam" id="PF00561">
    <property type="entry name" value="Abhydrolase_1"/>
    <property type="match status" value="1"/>
</dbReference>
<dbReference type="Pfam" id="PF00571">
    <property type="entry name" value="CBS"/>
    <property type="match status" value="2"/>
</dbReference>
<dbReference type="SMART" id="SM00116">
    <property type="entry name" value="CBS"/>
    <property type="match status" value="2"/>
</dbReference>
<dbReference type="SUPFAM" id="SSF53474">
    <property type="entry name" value="alpha/beta-Hydrolases"/>
    <property type="match status" value="1"/>
</dbReference>
<dbReference type="SUPFAM" id="SSF54631">
    <property type="entry name" value="CBS-domain pair"/>
    <property type="match status" value="1"/>
</dbReference>
<dbReference type="PROSITE" id="PS51371">
    <property type="entry name" value="CBS"/>
    <property type="match status" value="2"/>
</dbReference>
<keyword id="KW-0012">Acyltransferase</keyword>
<keyword id="KW-0028">Amino-acid biosynthesis</keyword>
<keyword id="KW-0129">CBS domain</keyword>
<keyword id="KW-0963">Cytoplasm</keyword>
<keyword id="KW-0486">Methionine biosynthesis</keyword>
<keyword id="KW-0677">Repeat</keyword>
<keyword id="KW-0808">Transferase</keyword>
<comment type="function">
    <text evidence="1 2">Transfers an acetyl group from acetyl-CoA to L-homoserine, forming acetyl-L-homoserine.</text>
</comment>
<comment type="catalytic activity">
    <reaction evidence="1 2">
        <text>L-homoserine + acetyl-CoA = O-acetyl-L-homoserine + CoA</text>
        <dbReference type="Rhea" id="RHEA:13701"/>
        <dbReference type="ChEBI" id="CHEBI:57287"/>
        <dbReference type="ChEBI" id="CHEBI:57288"/>
        <dbReference type="ChEBI" id="CHEBI:57476"/>
        <dbReference type="ChEBI" id="CHEBI:57716"/>
        <dbReference type="EC" id="2.3.1.31"/>
    </reaction>
</comment>
<comment type="pathway">
    <text evidence="1">Amino-acid biosynthesis; L-methionine biosynthesis via de novo pathway; O-acetyl-L-homoserine from L-homoserine: step 1/1.</text>
</comment>
<comment type="subunit">
    <text evidence="1">Homodimer.</text>
</comment>
<comment type="subcellular location">
    <subcellularLocation>
        <location evidence="1">Cytoplasm</location>
    </subcellularLocation>
</comment>
<comment type="similarity">
    <text evidence="1">Belongs to the AB hydrolase superfamily. MetX family.</text>
</comment>
<feature type="chain" id="PRO_0000440286" description="Homoserine O-acetyltransferase">
    <location>
        <begin position="1"/>
        <end position="488"/>
    </location>
</feature>
<feature type="domain" description="AB hydrolase-1" evidence="1">
    <location>
        <begin position="47"/>
        <end position="355"/>
    </location>
</feature>
<feature type="domain" description="CBS 1" evidence="1">
    <location>
        <begin position="376"/>
        <end position="433"/>
    </location>
</feature>
<feature type="domain" description="CBS 2" evidence="1">
    <location>
        <begin position="437"/>
        <end position="488"/>
    </location>
</feature>
<feature type="active site" description="Nucleophile" evidence="1">
    <location>
        <position position="153"/>
    </location>
</feature>
<feature type="active site" evidence="1">
    <location>
        <position position="316"/>
    </location>
</feature>
<feature type="active site" evidence="1">
    <location>
        <position position="349"/>
    </location>
</feature>
<feature type="binding site" evidence="1">
    <location>
        <position position="222"/>
    </location>
    <ligand>
        <name>substrate</name>
    </ligand>
</feature>
<feature type="binding site" evidence="1">
    <location>
        <position position="350"/>
    </location>
    <ligand>
        <name>substrate</name>
    </ligand>
</feature>
<organism>
    <name type="scientific">Methanococcoides burtonii (strain DSM 6242 / NBRC 107633 / OCM 468 / ACE-M)</name>
    <dbReference type="NCBI Taxonomy" id="259564"/>
    <lineage>
        <taxon>Archaea</taxon>
        <taxon>Methanobacteriati</taxon>
        <taxon>Methanobacteriota</taxon>
        <taxon>Stenosarchaea group</taxon>
        <taxon>Methanomicrobia</taxon>
        <taxon>Methanosarcinales</taxon>
        <taxon>Methanosarcinaceae</taxon>
        <taxon>Methanococcoides</taxon>
    </lineage>
</organism>
<gene>
    <name evidence="1 3" type="primary">metXA</name>
    <name evidence="4" type="ordered locus">Mbur_0798</name>
</gene>
<sequence>MSERSVGIVATNYHTIEGEFQLEGGHTLKNIRLAYETYGNLNKEKSNAILVCHALTGDAHAAGRHSDDDKKPGWWDDIIGPGKALDTDRYFVLCSNVLGGCKGTTGPASLDPDTGRQYGITFPVITIRDMVNVQKRLIDHMGITTLFAVVGGSMGGMQTLQWCVAYPELVKKAVVIASTAVSSPQQIAFNEVGRNAIISDPDWNGGDYYEGEPPVNGLSTARMIAHITYLSDASMHEKFGRRLQQGESYKFDMSNDFQVGSYLKYQGDTFTGRFDANSYLYATKAVDYFDLSMNGSLAEGLKYVQAKMLVISITSDWLYSPYHSKKIVEGLTVKEHDVSYREIESSYGHDAFLLESGQINYVIHNFLTHTSVADVMTEKVATIREGASIDTAAKVMFEEALTHLPVVNENGCLVGIVTSWDISKAVALKCSKLENIMTRDVLTAFPDEPIVAAAKRMERHSISALPVVDEKNRLIGIIDSEDINRLIG</sequence>